<name>COX2_COTJA</name>
<dbReference type="EC" id="7.1.1.9"/>
<dbReference type="EMBL" id="U36794">
    <property type="protein sequence ID" value="AAA76730.1"/>
    <property type="molecule type" value="Genomic_DNA"/>
</dbReference>
<dbReference type="EMBL" id="AP003195">
    <property type="protein sequence ID" value="BAB62918.1"/>
    <property type="molecule type" value="Genomic_DNA"/>
</dbReference>
<dbReference type="SMR" id="P50684"/>
<dbReference type="Ensembl" id="ENSCJPT00005000020.1">
    <property type="protein sequence ID" value="ENSCJPP00005000005.1"/>
    <property type="gene ID" value="ENSCJPG00005000020.1"/>
</dbReference>
<dbReference type="KEGG" id="cjo:804666"/>
<dbReference type="CTD" id="4513"/>
<dbReference type="GeneTree" id="ENSGT00390000017410"/>
<dbReference type="OrthoDB" id="539285at2759"/>
<dbReference type="Proteomes" id="UP000694412">
    <property type="component" value="Unassembled WGS sequence"/>
</dbReference>
<dbReference type="GO" id="GO:0005743">
    <property type="term" value="C:mitochondrial inner membrane"/>
    <property type="evidence" value="ECO:0007669"/>
    <property type="project" value="UniProtKB-SubCell"/>
</dbReference>
<dbReference type="GO" id="GO:0045277">
    <property type="term" value="C:respiratory chain complex IV"/>
    <property type="evidence" value="ECO:0000250"/>
    <property type="project" value="UniProtKB"/>
</dbReference>
<dbReference type="GO" id="GO:0005507">
    <property type="term" value="F:copper ion binding"/>
    <property type="evidence" value="ECO:0007669"/>
    <property type="project" value="InterPro"/>
</dbReference>
<dbReference type="GO" id="GO:0004129">
    <property type="term" value="F:cytochrome-c oxidase activity"/>
    <property type="evidence" value="ECO:0007669"/>
    <property type="project" value="UniProtKB-EC"/>
</dbReference>
<dbReference type="GO" id="GO:0042773">
    <property type="term" value="P:ATP synthesis coupled electron transport"/>
    <property type="evidence" value="ECO:0007669"/>
    <property type="project" value="TreeGrafter"/>
</dbReference>
<dbReference type="CDD" id="cd13912">
    <property type="entry name" value="CcO_II_C"/>
    <property type="match status" value="1"/>
</dbReference>
<dbReference type="FunFam" id="1.10.287.90:FF:000001">
    <property type="entry name" value="Cytochrome c oxidase subunit 2"/>
    <property type="match status" value="1"/>
</dbReference>
<dbReference type="FunFam" id="2.60.40.420:FF:000001">
    <property type="entry name" value="Cytochrome c oxidase subunit 2"/>
    <property type="match status" value="1"/>
</dbReference>
<dbReference type="Gene3D" id="1.10.287.90">
    <property type="match status" value="1"/>
</dbReference>
<dbReference type="Gene3D" id="2.60.40.420">
    <property type="entry name" value="Cupredoxins - blue copper proteins"/>
    <property type="match status" value="1"/>
</dbReference>
<dbReference type="InterPro" id="IPR045187">
    <property type="entry name" value="CcO_II"/>
</dbReference>
<dbReference type="InterPro" id="IPR002429">
    <property type="entry name" value="CcO_II-like_C"/>
</dbReference>
<dbReference type="InterPro" id="IPR034210">
    <property type="entry name" value="CcO_II_C"/>
</dbReference>
<dbReference type="InterPro" id="IPR001505">
    <property type="entry name" value="Copper_CuA"/>
</dbReference>
<dbReference type="InterPro" id="IPR008972">
    <property type="entry name" value="Cupredoxin"/>
</dbReference>
<dbReference type="InterPro" id="IPR014222">
    <property type="entry name" value="Cyt_c_oxidase_su2"/>
</dbReference>
<dbReference type="InterPro" id="IPR011759">
    <property type="entry name" value="Cyt_c_oxidase_su2_TM_dom"/>
</dbReference>
<dbReference type="InterPro" id="IPR036257">
    <property type="entry name" value="Cyt_c_oxidase_su2_TM_sf"/>
</dbReference>
<dbReference type="NCBIfam" id="TIGR02866">
    <property type="entry name" value="CoxB"/>
    <property type="match status" value="1"/>
</dbReference>
<dbReference type="PANTHER" id="PTHR22888:SF9">
    <property type="entry name" value="CYTOCHROME C OXIDASE SUBUNIT 2"/>
    <property type="match status" value="1"/>
</dbReference>
<dbReference type="PANTHER" id="PTHR22888">
    <property type="entry name" value="CYTOCHROME C OXIDASE, SUBUNIT II"/>
    <property type="match status" value="1"/>
</dbReference>
<dbReference type="Pfam" id="PF00116">
    <property type="entry name" value="COX2"/>
    <property type="match status" value="1"/>
</dbReference>
<dbReference type="Pfam" id="PF02790">
    <property type="entry name" value="COX2_TM"/>
    <property type="match status" value="1"/>
</dbReference>
<dbReference type="PRINTS" id="PR01166">
    <property type="entry name" value="CYCOXIDASEII"/>
</dbReference>
<dbReference type="SUPFAM" id="SSF49503">
    <property type="entry name" value="Cupredoxins"/>
    <property type="match status" value="1"/>
</dbReference>
<dbReference type="SUPFAM" id="SSF81464">
    <property type="entry name" value="Cytochrome c oxidase subunit II-like, transmembrane region"/>
    <property type="match status" value="1"/>
</dbReference>
<dbReference type="PROSITE" id="PS00078">
    <property type="entry name" value="COX2"/>
    <property type="match status" value="1"/>
</dbReference>
<dbReference type="PROSITE" id="PS50857">
    <property type="entry name" value="COX2_CUA"/>
    <property type="match status" value="1"/>
</dbReference>
<dbReference type="PROSITE" id="PS50999">
    <property type="entry name" value="COX2_TM"/>
    <property type="match status" value="1"/>
</dbReference>
<geneLocation type="mitochondrion"/>
<reference key="1">
    <citation type="submission" date="1995-09" db="EMBL/GenBank/DDBJ databases">
        <title>Nucleotide sequence of mitochondrial genes for COI, tRNAs Lys, Asp, Ser (UCN), COII and ATPases 8 and 6 of the quail Coturnix japonica.</title>
        <authorList>
            <person name="Ramirez V."/>
            <person name="Morais R."/>
        </authorList>
    </citation>
    <scope>NUCLEOTIDE SEQUENCE [GENOMIC DNA]</scope>
    <source>
        <tissue>Liver</tissue>
    </source>
</reference>
<reference key="2">
    <citation type="journal article" date="2001" name="Anim. Genet.">
        <title>Complete sequence of the Japanese quail (Coturnix japonica) mitochondrial genome and its genetic relationship with related species.</title>
        <authorList>
            <person name="Nishibori M."/>
            <person name="Hayashi T."/>
            <person name="Tsudzuki M."/>
            <person name="Yamamoto Y."/>
            <person name="Yasue H."/>
        </authorList>
    </citation>
    <scope>NUCLEOTIDE SEQUENCE [GENOMIC DNA]</scope>
    <source>
        <tissue>Blood</tissue>
    </source>
</reference>
<comment type="function">
    <text evidence="2">Component of the cytochrome c oxidase, the last enzyme in the mitochondrial electron transport chain which drives oxidative phosphorylation. The respiratory chain contains 3 multisubunit complexes succinate dehydrogenase (complex II, CII), ubiquinol-cytochrome c oxidoreductase (cytochrome b-c1 complex, complex III, CIII) and cytochrome c oxidase (complex IV, CIV), that cooperate to transfer electrons derived from NADH and succinate to molecular oxygen, creating an electrochemical gradient over the inner membrane that drives transmembrane transport and the ATP synthase. Cytochrome c oxidase is the component of the respiratory chain that catalyzes the reduction of oxygen to water. Electrons originating from reduced cytochrome c in the intermembrane space (IMS) are transferred via the dinuclear copper A center (CU(A)) of subunit 2 and heme A of subunit 1 to the active site in subunit 1, a binuclear center (BNC) formed by heme A3 and copper B (CU(B)). The BNC reduces molecular oxygen to 2 water molecules using 4 electrons from cytochrome c in the IMS and 4 protons from the mitochondrial matrix.</text>
</comment>
<comment type="catalytic activity">
    <reaction evidence="2">
        <text>4 Fe(II)-[cytochrome c] + O2 + 8 H(+)(in) = 4 Fe(III)-[cytochrome c] + 2 H2O + 4 H(+)(out)</text>
        <dbReference type="Rhea" id="RHEA:11436"/>
        <dbReference type="Rhea" id="RHEA-COMP:10350"/>
        <dbReference type="Rhea" id="RHEA-COMP:14399"/>
        <dbReference type="ChEBI" id="CHEBI:15377"/>
        <dbReference type="ChEBI" id="CHEBI:15378"/>
        <dbReference type="ChEBI" id="CHEBI:15379"/>
        <dbReference type="ChEBI" id="CHEBI:29033"/>
        <dbReference type="ChEBI" id="CHEBI:29034"/>
        <dbReference type="EC" id="7.1.1.9"/>
    </reaction>
    <physiologicalReaction direction="left-to-right" evidence="2">
        <dbReference type="Rhea" id="RHEA:11437"/>
    </physiologicalReaction>
</comment>
<comment type="cofactor">
    <cofactor evidence="3">
        <name>Cu cation</name>
        <dbReference type="ChEBI" id="CHEBI:23378"/>
    </cofactor>
    <text evidence="3">Binds a dinuclear copper A center per subunit.</text>
</comment>
<comment type="subunit">
    <text evidence="1 3">Component of the cytochrome c oxidase (complex IV, CIV), a multisubunit enzyme composed of 14 subunits. The complex is composed of a catalytic core of 3 subunits MT-CO1, MT-CO2 and MT-CO3, encoded in the mitochondrial DNA, and 11 supernumerary subunits COX4I, COX5A, COX5B, COX6A, COX6B, COX6C, COX7A, COX7B, COX7C, COX8 and NDUFA4, which are encoded in the nuclear genome. The complex exists as a monomer or a dimer and forms supercomplexes (SCs) in the inner mitochondrial membrane with NADH-ubiquinone oxidoreductase (complex I, CI) and ubiquinol-cytochrome c oxidoreductase (cytochrome b-c1 complex, complex III, CIII), resulting in different assemblies (supercomplex SCI(1)III(2)IV(1) and megacomplex MCI(2)III(2)IV(2)) (By similarity). Found in a complex with TMEM177, COA6, COX18, COX20, SCO1 and SCO2. Interacts with TMEM177 in a COX20-dependent manner. Interacts with COX20. Interacts with COX16 (By similarity).</text>
</comment>
<comment type="subcellular location">
    <subcellularLocation>
        <location evidence="3">Mitochondrion inner membrane</location>
        <topology evidence="3">Multi-pass membrane protein</topology>
    </subcellularLocation>
</comment>
<comment type="similarity">
    <text evidence="4">Belongs to the cytochrome c oxidase subunit 2 family.</text>
</comment>
<proteinExistence type="inferred from homology"/>
<evidence type="ECO:0000250" key="1">
    <source>
        <dbReference type="UniProtKB" id="P00403"/>
    </source>
</evidence>
<evidence type="ECO:0000250" key="2">
    <source>
        <dbReference type="UniProtKB" id="P00410"/>
    </source>
</evidence>
<evidence type="ECO:0000250" key="3">
    <source>
        <dbReference type="UniProtKB" id="P68530"/>
    </source>
</evidence>
<evidence type="ECO:0000305" key="4"/>
<keyword id="KW-0186">Copper</keyword>
<keyword id="KW-0249">Electron transport</keyword>
<keyword id="KW-0460">Magnesium</keyword>
<keyword id="KW-0472">Membrane</keyword>
<keyword id="KW-0479">Metal-binding</keyword>
<keyword id="KW-0496">Mitochondrion</keyword>
<keyword id="KW-0999">Mitochondrion inner membrane</keyword>
<keyword id="KW-1185">Reference proteome</keyword>
<keyword id="KW-0679">Respiratory chain</keyword>
<keyword id="KW-1278">Translocase</keyword>
<keyword id="KW-0812">Transmembrane</keyword>
<keyword id="KW-1133">Transmembrane helix</keyword>
<keyword id="KW-0813">Transport</keyword>
<feature type="chain" id="PRO_0000183555" description="Cytochrome c oxidase subunit 2">
    <location>
        <begin position="1"/>
        <end position="227"/>
    </location>
</feature>
<feature type="topological domain" description="Mitochondrial intermembrane" evidence="3">
    <location>
        <begin position="1"/>
        <end position="14"/>
    </location>
</feature>
<feature type="transmembrane region" description="Helical; Name=I" evidence="3">
    <location>
        <begin position="15"/>
        <end position="45"/>
    </location>
</feature>
<feature type="topological domain" description="Mitochondrial matrix" evidence="3">
    <location>
        <begin position="46"/>
        <end position="58"/>
    </location>
</feature>
<feature type="transmembrane region" description="Helical; Name=II" evidence="3">
    <location>
        <begin position="59"/>
        <end position="86"/>
    </location>
</feature>
<feature type="topological domain" description="Mitochondrial intermembrane" evidence="3">
    <location>
        <begin position="87"/>
        <end position="227"/>
    </location>
</feature>
<feature type="binding site" evidence="3">
    <location>
        <position position="160"/>
    </location>
    <ligand>
        <name>Cu cation</name>
        <dbReference type="ChEBI" id="CHEBI:23378"/>
        <label>A1</label>
    </ligand>
</feature>
<feature type="binding site" evidence="3">
    <location>
        <position position="195"/>
    </location>
    <ligand>
        <name>Cu cation</name>
        <dbReference type="ChEBI" id="CHEBI:23378"/>
        <label>A1</label>
    </ligand>
</feature>
<feature type="binding site" evidence="3">
    <location>
        <position position="195"/>
    </location>
    <ligand>
        <name>Cu cation</name>
        <dbReference type="ChEBI" id="CHEBI:23378"/>
        <label>A2</label>
    </ligand>
</feature>
<feature type="binding site" evidence="3">
    <location>
        <position position="197"/>
    </location>
    <ligand>
        <name>Cu cation</name>
        <dbReference type="ChEBI" id="CHEBI:23378"/>
        <label>A2</label>
    </ligand>
</feature>
<feature type="binding site" evidence="3">
    <location>
        <position position="197"/>
    </location>
    <ligand>
        <name>Mg(2+)</name>
        <dbReference type="ChEBI" id="CHEBI:18420"/>
        <note>ligand shared with MT-CO1</note>
    </ligand>
</feature>
<feature type="binding site" evidence="3">
    <location>
        <position position="199"/>
    </location>
    <ligand>
        <name>Cu cation</name>
        <dbReference type="ChEBI" id="CHEBI:23378"/>
        <label>A1</label>
    </ligand>
</feature>
<feature type="binding site" evidence="3">
    <location>
        <position position="199"/>
    </location>
    <ligand>
        <name>Cu cation</name>
        <dbReference type="ChEBI" id="CHEBI:23378"/>
        <label>A2</label>
    </ligand>
</feature>
<feature type="binding site" evidence="3">
    <location>
        <position position="203"/>
    </location>
    <ligand>
        <name>Cu cation</name>
        <dbReference type="ChEBI" id="CHEBI:23378"/>
        <label>A2</label>
    </ligand>
</feature>
<feature type="binding site" evidence="3">
    <location>
        <position position="206"/>
    </location>
    <ligand>
        <name>Cu cation</name>
        <dbReference type="ChEBI" id="CHEBI:23378"/>
        <label>A1</label>
    </ligand>
</feature>
<feature type="sequence conflict" description="In Ref. 1; AAA76730." evidence="4" ref="1">
    <original>H</original>
    <variation>Q</variation>
    <location>
        <position position="4"/>
    </location>
</feature>
<feature type="sequence conflict" description="In Ref. 1; AAA76730." evidence="4" ref="1">
    <original>P</original>
    <variation>S</variation>
    <location>
        <position position="15"/>
    </location>
</feature>
<sequence>MANHSQLGFQDASSPIMEELVEFHDHALMVALAICSLVLYLLTLMLTQKLSSNTVDAQEVELIWTILPAIVLVLLALPSLQILYMMDEIEEPDLTLKAIGHQWYWSYEYTDFKDLSFDSYMTPTTDLPQGHFRLLEVDHRIVIPMESPIRIIITADDVLHSWAVPTLGVKTDAIPGRLNQTSFITTRPGVFYGQCSEICGANHSYMPIVVESTPLKHFETWSSLLSS</sequence>
<protein>
    <recommendedName>
        <fullName>Cytochrome c oxidase subunit 2</fullName>
        <ecNumber>7.1.1.9</ecNumber>
    </recommendedName>
    <alternativeName>
        <fullName>Cytochrome c oxidase polypeptide II</fullName>
    </alternativeName>
</protein>
<accession>P50684</accession>
<accession>Q8SEX0</accession>
<gene>
    <name type="primary">MT-CO2</name>
    <name type="synonym">COII</name>
    <name type="synonym">COXII</name>
    <name type="synonym">MTCO2</name>
</gene>
<organism>
    <name type="scientific">Coturnix japonica</name>
    <name type="common">Japanese quail</name>
    <name type="synonym">Coturnix coturnix japonica</name>
    <dbReference type="NCBI Taxonomy" id="93934"/>
    <lineage>
        <taxon>Eukaryota</taxon>
        <taxon>Metazoa</taxon>
        <taxon>Chordata</taxon>
        <taxon>Craniata</taxon>
        <taxon>Vertebrata</taxon>
        <taxon>Euteleostomi</taxon>
        <taxon>Archelosauria</taxon>
        <taxon>Archosauria</taxon>
        <taxon>Dinosauria</taxon>
        <taxon>Saurischia</taxon>
        <taxon>Theropoda</taxon>
        <taxon>Coelurosauria</taxon>
        <taxon>Aves</taxon>
        <taxon>Neognathae</taxon>
        <taxon>Galloanserae</taxon>
        <taxon>Galliformes</taxon>
        <taxon>Phasianidae</taxon>
        <taxon>Perdicinae</taxon>
        <taxon>Coturnix</taxon>
    </lineage>
</organism>